<keyword id="KW-0025">Alternative splicing</keyword>
<keyword id="KW-0090">Biological rhythms</keyword>
<keyword id="KW-1015">Disulfide bond</keyword>
<keyword id="KW-0527">Neuropeptide</keyword>
<keyword id="KW-1185">Reference proteome</keyword>
<keyword id="KW-0964">Secreted</keyword>
<keyword id="KW-0732">Signal</keyword>
<organism>
    <name type="scientific">Mus musculus</name>
    <name type="common">Mouse</name>
    <dbReference type="NCBI Taxonomy" id="10090"/>
    <lineage>
        <taxon>Eukaryota</taxon>
        <taxon>Metazoa</taxon>
        <taxon>Chordata</taxon>
        <taxon>Craniata</taxon>
        <taxon>Vertebrata</taxon>
        <taxon>Euteleostomi</taxon>
        <taxon>Mammalia</taxon>
        <taxon>Eutheria</taxon>
        <taxon>Euarchontoglires</taxon>
        <taxon>Glires</taxon>
        <taxon>Rodentia</taxon>
        <taxon>Myomorpha</taxon>
        <taxon>Muroidea</taxon>
        <taxon>Muridae</taxon>
        <taxon>Murinae</taxon>
        <taxon>Mus</taxon>
        <taxon>Mus</taxon>
    </lineage>
</organism>
<comment type="function">
    <text evidence="1 3">May function as an output molecule from the suprachiasmatic nucleus (SCN) that transmits behavioral circadian rhythm. May also function locally within the SCN to synchronize output. Potently contracts gastrointestinal (GI) smooth muscle (By similarity).</text>
</comment>
<comment type="subcellular location">
    <subcellularLocation>
        <location>Secreted</location>
    </subcellularLocation>
</comment>
<comment type="alternative products">
    <event type="alternative splicing"/>
    <isoform>
        <id>Q9QXU7-1</id>
        <name>1</name>
        <name>Bv8-a</name>
        <sequence type="displayed"/>
    </isoform>
    <isoform>
        <id>Q9QXU7-2</id>
        <name>2</name>
        <name>Bv8-b</name>
        <sequence type="described" ref="VSP_005220"/>
    </isoform>
    <isoform>
        <id>Q9QXU7-3</id>
        <name>3</name>
        <sequence type="described" ref="VSP_005221"/>
    </isoform>
</comment>
<comment type="tissue specificity">
    <text>Expressed in the SCN and among a few other discrete brain areas, including the islands of Calleja, media l preoptic area of the hypothalamus and the shell of the nucleus accumbens. Highly expressed in testis. In the SCN, expression subjected to high amplitude of circadian oscillation.</text>
</comment>
<comment type="developmental stage">
    <text>Expressed in mid-late pachytene spermatocytes at the stages VII, VIII and IX of the semiferous epithelial cycle.</text>
</comment>
<comment type="induction">
    <text>Activated by CLOCK and BMAL1 heterodimers and light; inhibited by period genes (PER1, PER2 and PER3) and cryptochrome genes (CRY1 and CRY2).</text>
</comment>
<comment type="similarity">
    <text evidence="8">Belongs to the AVIT (prokineticin) family.</text>
</comment>
<dbReference type="EMBL" id="AF182064">
    <property type="protein sequence ID" value="AAF15259.1"/>
    <property type="molecule type" value="mRNA"/>
</dbReference>
<dbReference type="EMBL" id="AF182065">
    <property type="protein sequence ID" value="AAF15260.1"/>
    <property type="molecule type" value="mRNA"/>
</dbReference>
<dbReference type="EMBL" id="AF182066">
    <property type="protein sequence ID" value="AAF15261.1"/>
    <property type="molecule type" value="mRNA"/>
</dbReference>
<dbReference type="EMBL" id="AF182068">
    <property type="protein sequence ID" value="AAG09439.1"/>
    <property type="molecule type" value="Genomic_DNA"/>
</dbReference>
<dbReference type="EMBL" id="AF182067">
    <property type="protein sequence ID" value="AAG09439.1"/>
    <property type="status" value="JOINED"/>
    <property type="molecule type" value="Genomic_DNA"/>
</dbReference>
<dbReference type="EMBL" id="AF487280">
    <property type="protein sequence ID" value="AAM49572.1"/>
    <property type="molecule type" value="mRNA"/>
</dbReference>
<dbReference type="EMBL" id="AK015462">
    <property type="protein sequence ID" value="BAB29857.1"/>
    <property type="molecule type" value="mRNA"/>
</dbReference>
<dbReference type="EMBL" id="BC144863">
    <property type="protein sequence ID" value="AAI44864.1"/>
    <property type="molecule type" value="mRNA"/>
</dbReference>
<dbReference type="CCDS" id="CCDS20388.1">
    <molecule id="Q9QXU7-2"/>
</dbReference>
<dbReference type="CCDS" id="CCDS20389.1">
    <molecule id="Q9QXU7-1"/>
</dbReference>
<dbReference type="RefSeq" id="NP_001032628.1">
    <molecule id="Q9QXU7-2"/>
    <property type="nucleotide sequence ID" value="NM_001037539.3"/>
</dbReference>
<dbReference type="RefSeq" id="NP_001388428.1">
    <molecule id="Q9QXU7-3"/>
    <property type="nucleotide sequence ID" value="NM_001401499.1"/>
</dbReference>
<dbReference type="RefSeq" id="NP_056583.1">
    <molecule id="Q9QXU7-1"/>
    <property type="nucleotide sequence ID" value="NM_015768.3"/>
</dbReference>
<dbReference type="SMR" id="Q9QXU7"/>
<dbReference type="BioGRID" id="206046">
    <property type="interactions" value="1"/>
</dbReference>
<dbReference type="FunCoup" id="Q9QXU7">
    <property type="interactions" value="81"/>
</dbReference>
<dbReference type="STRING" id="10090.ENSMUSP00000032152"/>
<dbReference type="iPTMnet" id="Q9QXU7"/>
<dbReference type="PaxDb" id="10090-ENSMUSP00000032152"/>
<dbReference type="ProteomicsDB" id="291879">
    <molecule id="Q9QXU7-1"/>
</dbReference>
<dbReference type="ProteomicsDB" id="291880">
    <molecule id="Q9QXU7-2"/>
</dbReference>
<dbReference type="ProteomicsDB" id="291881">
    <molecule id="Q9QXU7-3"/>
</dbReference>
<dbReference type="Antibodypedia" id="31927">
    <property type="antibodies" value="207 antibodies from 28 providers"/>
</dbReference>
<dbReference type="DNASU" id="50501"/>
<dbReference type="Ensembl" id="ENSMUST00000032152.14">
    <molecule id="Q9QXU7-1"/>
    <property type="protein sequence ID" value="ENSMUSP00000032152.9"/>
    <property type="gene ID" value="ENSMUSG00000030069.16"/>
</dbReference>
<dbReference type="Ensembl" id="ENSMUST00000101120.11">
    <molecule id="Q9QXU7-2"/>
    <property type="protein sequence ID" value="ENSMUSP00000098678.5"/>
    <property type="gene ID" value="ENSMUSG00000030069.16"/>
</dbReference>
<dbReference type="Ensembl" id="ENSMUST00000203738.2">
    <molecule id="Q9QXU7-3"/>
    <property type="protein sequence ID" value="ENSMUSP00000144760.2"/>
    <property type="gene ID" value="ENSMUSG00000030069.16"/>
</dbReference>
<dbReference type="GeneID" id="50501"/>
<dbReference type="KEGG" id="mmu:50501"/>
<dbReference type="UCSC" id="uc009dbt.1">
    <molecule id="Q9QXU7-1"/>
    <property type="organism name" value="mouse"/>
</dbReference>
<dbReference type="UCSC" id="uc009dbu.1">
    <molecule id="Q9QXU7-2"/>
    <property type="organism name" value="mouse"/>
</dbReference>
<dbReference type="UCSC" id="uc009dbv.1">
    <molecule id="Q9QXU7-3"/>
    <property type="organism name" value="mouse"/>
</dbReference>
<dbReference type="AGR" id="MGI:1354178"/>
<dbReference type="CTD" id="60675"/>
<dbReference type="MGI" id="MGI:1354178">
    <property type="gene designation" value="Prok2"/>
</dbReference>
<dbReference type="VEuPathDB" id="HostDB:ENSMUSG00000030069"/>
<dbReference type="eggNOG" id="ENOG502SU1D">
    <property type="taxonomic scope" value="Eukaryota"/>
</dbReference>
<dbReference type="GeneTree" id="ENSGT00940000162026"/>
<dbReference type="HOGENOM" id="CLU_143202_1_0_1"/>
<dbReference type="InParanoid" id="Q9QXU7"/>
<dbReference type="OMA" id="NCHPLSH"/>
<dbReference type="OrthoDB" id="6433669at2759"/>
<dbReference type="PhylomeDB" id="Q9QXU7"/>
<dbReference type="TreeFam" id="TF332732"/>
<dbReference type="Reactome" id="R-MMU-375276">
    <property type="pathway name" value="Peptide ligand-binding receptors"/>
</dbReference>
<dbReference type="Reactome" id="R-MMU-416476">
    <property type="pathway name" value="G alpha (q) signalling events"/>
</dbReference>
<dbReference type="BioGRID-ORCS" id="50501">
    <property type="hits" value="4 hits in 73 CRISPR screens"/>
</dbReference>
<dbReference type="PRO" id="PR:Q9QXU7"/>
<dbReference type="Proteomes" id="UP000000589">
    <property type="component" value="Chromosome 6"/>
</dbReference>
<dbReference type="RNAct" id="Q9QXU7">
    <property type="molecule type" value="protein"/>
</dbReference>
<dbReference type="Bgee" id="ENSMUSG00000030069">
    <property type="expression patterns" value="Expressed in spermatocyte and 29 other cell types or tissues"/>
</dbReference>
<dbReference type="ExpressionAtlas" id="Q9QXU7">
    <property type="expression patterns" value="baseline and differential"/>
</dbReference>
<dbReference type="GO" id="GO:0005576">
    <property type="term" value="C:extracellular region"/>
    <property type="evidence" value="ECO:0007669"/>
    <property type="project" value="UniProtKB-SubCell"/>
</dbReference>
<dbReference type="GO" id="GO:0001664">
    <property type="term" value="F:G protein-coupled receptor binding"/>
    <property type="evidence" value="ECO:0000304"/>
    <property type="project" value="DFLAT"/>
</dbReference>
<dbReference type="GO" id="GO:0001525">
    <property type="term" value="P:angiogenesis"/>
    <property type="evidence" value="ECO:0000250"/>
    <property type="project" value="UniProtKB"/>
</dbReference>
<dbReference type="GO" id="GO:0006935">
    <property type="term" value="P:chemotaxis"/>
    <property type="evidence" value="ECO:0000250"/>
    <property type="project" value="UniProtKB"/>
</dbReference>
<dbReference type="GO" id="GO:0007623">
    <property type="term" value="P:circadian rhythm"/>
    <property type="evidence" value="ECO:0000314"/>
    <property type="project" value="MGI"/>
</dbReference>
<dbReference type="GO" id="GO:0060976">
    <property type="term" value="P:coronary vasculature development"/>
    <property type="evidence" value="ECO:0000304"/>
    <property type="project" value="DFLAT"/>
</dbReference>
<dbReference type="GO" id="GO:0001935">
    <property type="term" value="P:endothelial cell proliferation"/>
    <property type="evidence" value="ECO:0000250"/>
    <property type="project" value="UniProtKB"/>
</dbReference>
<dbReference type="GO" id="GO:0003349">
    <property type="term" value="P:epicardium-derived cardiac endothelial cell differentiation"/>
    <property type="evidence" value="ECO:0000304"/>
    <property type="project" value="DFLAT"/>
</dbReference>
<dbReference type="GO" id="GO:0060983">
    <property type="term" value="P:epicardium-derived cardiac vascular smooth muscle cell differentiation"/>
    <property type="evidence" value="ECO:0000304"/>
    <property type="project" value="DFLAT"/>
</dbReference>
<dbReference type="GO" id="GO:0043066">
    <property type="term" value="P:negative regulation of apoptotic process"/>
    <property type="evidence" value="ECO:0000250"/>
    <property type="project" value="UniProtKB"/>
</dbReference>
<dbReference type="GO" id="GO:0007218">
    <property type="term" value="P:neuropeptide signaling pathway"/>
    <property type="evidence" value="ECO:0007669"/>
    <property type="project" value="UniProtKB-KW"/>
</dbReference>
<dbReference type="GO" id="GO:0045987">
    <property type="term" value="P:positive regulation of smooth muscle contraction"/>
    <property type="evidence" value="ECO:0000250"/>
    <property type="project" value="UniProtKB"/>
</dbReference>
<dbReference type="GO" id="GO:0007283">
    <property type="term" value="P:spermatogenesis"/>
    <property type="evidence" value="ECO:0000250"/>
    <property type="project" value="UniProtKB"/>
</dbReference>
<dbReference type="GO" id="GO:0060979">
    <property type="term" value="P:vasculogenesis involved in coronary vascular morphogenesis"/>
    <property type="evidence" value="ECO:0000304"/>
    <property type="project" value="DFLAT"/>
</dbReference>
<dbReference type="FunFam" id="2.10.80.10:FF:000002">
    <property type="entry name" value="prokineticin-2 isoform X2"/>
    <property type="match status" value="1"/>
</dbReference>
<dbReference type="Gene3D" id="2.10.80.10">
    <property type="entry name" value="Lipase, subunit A"/>
    <property type="match status" value="1"/>
</dbReference>
<dbReference type="InterPro" id="IPR009523">
    <property type="entry name" value="Prokineticin"/>
</dbReference>
<dbReference type="InterPro" id="IPR023569">
    <property type="entry name" value="Prokineticin_domain"/>
</dbReference>
<dbReference type="PANTHER" id="PTHR18821">
    <property type="entry name" value="PROKINETICIN"/>
    <property type="match status" value="1"/>
</dbReference>
<dbReference type="PANTHER" id="PTHR18821:SF8">
    <property type="entry name" value="PROKINETICIN-2"/>
    <property type="match status" value="1"/>
</dbReference>
<dbReference type="Pfam" id="PF06607">
    <property type="entry name" value="Prokineticin"/>
    <property type="match status" value="1"/>
</dbReference>
<dbReference type="SUPFAM" id="SSF57190">
    <property type="entry name" value="Colipase-like"/>
    <property type="match status" value="2"/>
</dbReference>
<proteinExistence type="evidence at transcript level"/>
<gene>
    <name type="primary">Prok2</name>
    <name type="synonym">Bv8</name>
</gene>
<protein>
    <recommendedName>
        <fullName>Prokineticin-2</fullName>
        <shortName>PK2</shortName>
    </recommendedName>
    <alternativeName>
        <fullName>Protein Bv8 homolog</fullName>
    </alternativeName>
</protein>
<reference key="1">
    <citation type="journal article" date="1999" name="FEBS Lett.">
        <title>The mammalian homologues of frog Bv8 are mainly expressed in spermatocytes.</title>
        <authorList>
            <person name="Wechselberger C."/>
            <person name="Puglisi R."/>
            <person name="Lepperdinger G."/>
            <person name="Boitani C."/>
            <person name="Kreil G."/>
        </authorList>
    </citation>
    <scope>NUCLEOTIDE SEQUENCE [MRNA] (ISOFORMS 1 AND 2)</scope>
    <source>
        <strain>129/Sv</strain>
    </source>
</reference>
<reference key="2">
    <citation type="journal article" date="2000" name="Gene">
        <title>Murine Bv8 gene maps near a synteny breakpoint of mouse chromosome 6 and human 3p21.</title>
        <authorList>
            <person name="Jilek A."/>
            <person name="Engel E."/>
            <person name="Beier D."/>
            <person name="Lepperdinger G."/>
        </authorList>
    </citation>
    <scope>NUCLEOTIDE SEQUENCE [GENOMIC DNA / MRNA] (ISOFORMS 1; 2 AND 3)</scope>
    <source>
        <strain>129/SvJ</strain>
    </source>
</reference>
<reference key="3">
    <citation type="journal article" date="2002" name="Nature">
        <title>Prokineticin 2 transmits the behavioural circadian rhythm of the suprachiasmatic nucleus.</title>
        <authorList>
            <person name="Cheng M.Y."/>
            <person name="Bullock C.M."/>
            <person name="Li C."/>
            <person name="Lee A.G."/>
            <person name="Bermak J.C."/>
            <person name="Belluzzi J."/>
            <person name="Weaver D.R."/>
            <person name="Leslie F.M."/>
            <person name="Zhou Q.-Y."/>
        </authorList>
    </citation>
    <scope>NUCLEOTIDE SEQUENCE [MRNA] (ISOFORM 2)</scope>
    <scope>FUNCTION</scope>
    <source>
        <strain>C57BL/6J</strain>
    </source>
</reference>
<reference key="4">
    <citation type="journal article" date="2005" name="Science">
        <title>The transcriptional landscape of the mammalian genome.</title>
        <authorList>
            <person name="Carninci P."/>
            <person name="Kasukawa T."/>
            <person name="Katayama S."/>
            <person name="Gough J."/>
            <person name="Frith M.C."/>
            <person name="Maeda N."/>
            <person name="Oyama R."/>
            <person name="Ravasi T."/>
            <person name="Lenhard B."/>
            <person name="Wells C."/>
            <person name="Kodzius R."/>
            <person name="Shimokawa K."/>
            <person name="Bajic V.B."/>
            <person name="Brenner S.E."/>
            <person name="Batalov S."/>
            <person name="Forrest A.R."/>
            <person name="Zavolan M."/>
            <person name="Davis M.J."/>
            <person name="Wilming L.G."/>
            <person name="Aidinis V."/>
            <person name="Allen J.E."/>
            <person name="Ambesi-Impiombato A."/>
            <person name="Apweiler R."/>
            <person name="Aturaliya R.N."/>
            <person name="Bailey T.L."/>
            <person name="Bansal M."/>
            <person name="Baxter L."/>
            <person name="Beisel K.W."/>
            <person name="Bersano T."/>
            <person name="Bono H."/>
            <person name="Chalk A.M."/>
            <person name="Chiu K.P."/>
            <person name="Choudhary V."/>
            <person name="Christoffels A."/>
            <person name="Clutterbuck D.R."/>
            <person name="Crowe M.L."/>
            <person name="Dalla E."/>
            <person name="Dalrymple B.P."/>
            <person name="de Bono B."/>
            <person name="Della Gatta G."/>
            <person name="di Bernardo D."/>
            <person name="Down T."/>
            <person name="Engstrom P."/>
            <person name="Fagiolini M."/>
            <person name="Faulkner G."/>
            <person name="Fletcher C.F."/>
            <person name="Fukushima T."/>
            <person name="Furuno M."/>
            <person name="Futaki S."/>
            <person name="Gariboldi M."/>
            <person name="Georgii-Hemming P."/>
            <person name="Gingeras T.R."/>
            <person name="Gojobori T."/>
            <person name="Green R.E."/>
            <person name="Gustincich S."/>
            <person name="Harbers M."/>
            <person name="Hayashi Y."/>
            <person name="Hensch T.K."/>
            <person name="Hirokawa N."/>
            <person name="Hill D."/>
            <person name="Huminiecki L."/>
            <person name="Iacono M."/>
            <person name="Ikeo K."/>
            <person name="Iwama A."/>
            <person name="Ishikawa T."/>
            <person name="Jakt M."/>
            <person name="Kanapin A."/>
            <person name="Katoh M."/>
            <person name="Kawasawa Y."/>
            <person name="Kelso J."/>
            <person name="Kitamura H."/>
            <person name="Kitano H."/>
            <person name="Kollias G."/>
            <person name="Krishnan S.P."/>
            <person name="Kruger A."/>
            <person name="Kummerfeld S.K."/>
            <person name="Kurochkin I.V."/>
            <person name="Lareau L.F."/>
            <person name="Lazarevic D."/>
            <person name="Lipovich L."/>
            <person name="Liu J."/>
            <person name="Liuni S."/>
            <person name="McWilliam S."/>
            <person name="Madan Babu M."/>
            <person name="Madera M."/>
            <person name="Marchionni L."/>
            <person name="Matsuda H."/>
            <person name="Matsuzawa S."/>
            <person name="Miki H."/>
            <person name="Mignone F."/>
            <person name="Miyake S."/>
            <person name="Morris K."/>
            <person name="Mottagui-Tabar S."/>
            <person name="Mulder N."/>
            <person name="Nakano N."/>
            <person name="Nakauchi H."/>
            <person name="Ng P."/>
            <person name="Nilsson R."/>
            <person name="Nishiguchi S."/>
            <person name="Nishikawa S."/>
            <person name="Nori F."/>
            <person name="Ohara O."/>
            <person name="Okazaki Y."/>
            <person name="Orlando V."/>
            <person name="Pang K.C."/>
            <person name="Pavan W.J."/>
            <person name="Pavesi G."/>
            <person name="Pesole G."/>
            <person name="Petrovsky N."/>
            <person name="Piazza S."/>
            <person name="Reed J."/>
            <person name="Reid J.F."/>
            <person name="Ring B.Z."/>
            <person name="Ringwald M."/>
            <person name="Rost B."/>
            <person name="Ruan Y."/>
            <person name="Salzberg S.L."/>
            <person name="Sandelin A."/>
            <person name="Schneider C."/>
            <person name="Schoenbach C."/>
            <person name="Sekiguchi K."/>
            <person name="Semple C.A."/>
            <person name="Seno S."/>
            <person name="Sessa L."/>
            <person name="Sheng Y."/>
            <person name="Shibata Y."/>
            <person name="Shimada H."/>
            <person name="Shimada K."/>
            <person name="Silva D."/>
            <person name="Sinclair B."/>
            <person name="Sperling S."/>
            <person name="Stupka E."/>
            <person name="Sugiura K."/>
            <person name="Sultana R."/>
            <person name="Takenaka Y."/>
            <person name="Taki K."/>
            <person name="Tammoja K."/>
            <person name="Tan S.L."/>
            <person name="Tang S."/>
            <person name="Taylor M.S."/>
            <person name="Tegner J."/>
            <person name="Teichmann S.A."/>
            <person name="Ueda H.R."/>
            <person name="van Nimwegen E."/>
            <person name="Verardo R."/>
            <person name="Wei C.L."/>
            <person name="Yagi K."/>
            <person name="Yamanishi H."/>
            <person name="Zabarovsky E."/>
            <person name="Zhu S."/>
            <person name="Zimmer A."/>
            <person name="Hide W."/>
            <person name="Bult C."/>
            <person name="Grimmond S.M."/>
            <person name="Teasdale R.D."/>
            <person name="Liu E.T."/>
            <person name="Brusic V."/>
            <person name="Quackenbush J."/>
            <person name="Wahlestedt C."/>
            <person name="Mattick J.S."/>
            <person name="Hume D.A."/>
            <person name="Kai C."/>
            <person name="Sasaki D."/>
            <person name="Tomaru Y."/>
            <person name="Fukuda S."/>
            <person name="Kanamori-Katayama M."/>
            <person name="Suzuki M."/>
            <person name="Aoki J."/>
            <person name="Arakawa T."/>
            <person name="Iida J."/>
            <person name="Imamura K."/>
            <person name="Itoh M."/>
            <person name="Kato T."/>
            <person name="Kawaji H."/>
            <person name="Kawagashira N."/>
            <person name="Kawashima T."/>
            <person name="Kojima M."/>
            <person name="Kondo S."/>
            <person name="Konno H."/>
            <person name="Nakano K."/>
            <person name="Ninomiya N."/>
            <person name="Nishio T."/>
            <person name="Okada M."/>
            <person name="Plessy C."/>
            <person name="Shibata K."/>
            <person name="Shiraki T."/>
            <person name="Suzuki S."/>
            <person name="Tagami M."/>
            <person name="Waki K."/>
            <person name="Watahiki A."/>
            <person name="Okamura-Oho Y."/>
            <person name="Suzuki H."/>
            <person name="Kawai J."/>
            <person name="Hayashizaki Y."/>
        </authorList>
    </citation>
    <scope>NUCLEOTIDE SEQUENCE [LARGE SCALE MRNA] (ISOFORM 1)</scope>
    <source>
        <strain>C57BL/6J</strain>
        <tissue>Testis</tissue>
    </source>
</reference>
<reference key="5">
    <citation type="journal article" date="2004" name="Genome Res.">
        <title>The status, quality, and expansion of the NIH full-length cDNA project: the Mammalian Gene Collection (MGC).</title>
        <authorList>
            <consortium name="The MGC Project Team"/>
        </authorList>
    </citation>
    <scope>NUCLEOTIDE SEQUENCE [LARGE SCALE MRNA] (ISOFORM 2)</scope>
    <source>
        <tissue>Testis</tissue>
    </source>
</reference>
<feature type="signal peptide" evidence="2">
    <location>
        <begin position="1"/>
        <end position="26"/>
    </location>
</feature>
<feature type="chain" id="PRO_0000025810" description="Prokineticin-2">
    <location>
        <begin position="27"/>
        <end position="128"/>
    </location>
</feature>
<feature type="disulfide bond" evidence="1">
    <location>
        <begin position="33"/>
        <end position="45"/>
    </location>
</feature>
<feature type="disulfide bond" evidence="1">
    <location>
        <begin position="39"/>
        <end position="57"/>
    </location>
</feature>
<feature type="disulfide bond" evidence="1">
    <location>
        <begin position="44"/>
        <end position="106"/>
    </location>
</feature>
<feature type="disulfide bond" evidence="1">
    <location>
        <begin position="67"/>
        <end position="114"/>
    </location>
</feature>
<feature type="disulfide bond" evidence="1">
    <location>
        <begin position="108"/>
        <end position="124"/>
    </location>
</feature>
<feature type="splice variant" id="VSP_005221" description="In isoform 3." evidence="5">
    <original>SHVANGRQERRRAKRRKRKKEVPFWGRRMHHTCPCLPGLACLRTSFNRFICLARK</original>
    <variation>VSVCTGILGVPSH</variation>
    <location>
        <begin position="74"/>
        <end position="128"/>
    </location>
</feature>
<feature type="splice variant" id="VSP_005220" description="In isoform 2." evidence="4 5 6 7">
    <location>
        <begin position="74"/>
        <end position="94"/>
    </location>
</feature>
<sequence length="128" mass="14185">MGDPRCAPLLLLLLLPLLFTPPAGDAAVITGACDKDSQCGGGMCCAVSIWVKSIRICTPMGQVGDSCHPLTRKSHVANGRQERRRAKRRKRKKEVPFWGRRMHHTCPCLPGLACLRTSFNRFICLARK</sequence>
<name>PROK2_MOUSE</name>
<accession>Q9QXU7</accession>
<accession>B7ZMX7</accession>
<accession>Q9QXU5</accession>
<accession>Q9QXU6</accession>
<evidence type="ECO:0000250" key="1"/>
<evidence type="ECO:0000255" key="2"/>
<evidence type="ECO:0000269" key="3">
    <source>
    </source>
</evidence>
<evidence type="ECO:0000303" key="4">
    <source>
    </source>
</evidence>
<evidence type="ECO:0000303" key="5">
    <source>
    </source>
</evidence>
<evidence type="ECO:0000303" key="6">
    <source>
    </source>
</evidence>
<evidence type="ECO:0000303" key="7">
    <source>
    </source>
</evidence>
<evidence type="ECO:0000305" key="8"/>